<dbReference type="EC" id="4.1.1.37" evidence="1"/>
<dbReference type="EMBL" id="CP001391">
    <property type="protein sequence ID" value="ACN95691.1"/>
    <property type="molecule type" value="Genomic_DNA"/>
</dbReference>
<dbReference type="RefSeq" id="WP_012673335.1">
    <property type="nucleotide sequence ID" value="NZ_MKIF01000073.1"/>
</dbReference>
<dbReference type="SMR" id="C0R449"/>
<dbReference type="STRING" id="66084.WRi_009840"/>
<dbReference type="KEGG" id="wri:WRi_009840"/>
<dbReference type="HOGENOM" id="CLU_040933_0_0_5"/>
<dbReference type="UniPathway" id="UPA00251">
    <property type="reaction ID" value="UER00321"/>
</dbReference>
<dbReference type="Proteomes" id="UP000001293">
    <property type="component" value="Chromosome"/>
</dbReference>
<dbReference type="GO" id="GO:0005829">
    <property type="term" value="C:cytosol"/>
    <property type="evidence" value="ECO:0007669"/>
    <property type="project" value="TreeGrafter"/>
</dbReference>
<dbReference type="GO" id="GO:0004853">
    <property type="term" value="F:uroporphyrinogen decarboxylase activity"/>
    <property type="evidence" value="ECO:0007669"/>
    <property type="project" value="UniProtKB-UniRule"/>
</dbReference>
<dbReference type="GO" id="GO:0006782">
    <property type="term" value="P:protoporphyrinogen IX biosynthetic process"/>
    <property type="evidence" value="ECO:0007669"/>
    <property type="project" value="UniProtKB-UniRule"/>
</dbReference>
<dbReference type="CDD" id="cd00717">
    <property type="entry name" value="URO-D"/>
    <property type="match status" value="1"/>
</dbReference>
<dbReference type="Gene3D" id="3.20.20.210">
    <property type="match status" value="1"/>
</dbReference>
<dbReference type="HAMAP" id="MF_00218">
    <property type="entry name" value="URO_D"/>
    <property type="match status" value="1"/>
</dbReference>
<dbReference type="InterPro" id="IPR038071">
    <property type="entry name" value="UROD/MetE-like_sf"/>
</dbReference>
<dbReference type="InterPro" id="IPR006361">
    <property type="entry name" value="Uroporphyrinogen_deCO2ase_HemE"/>
</dbReference>
<dbReference type="InterPro" id="IPR000257">
    <property type="entry name" value="Uroporphyrinogen_deCOase"/>
</dbReference>
<dbReference type="NCBIfam" id="TIGR01464">
    <property type="entry name" value="hemE"/>
    <property type="match status" value="1"/>
</dbReference>
<dbReference type="PANTHER" id="PTHR21091">
    <property type="entry name" value="METHYLTETRAHYDROFOLATE:HOMOCYSTEINE METHYLTRANSFERASE RELATED"/>
    <property type="match status" value="1"/>
</dbReference>
<dbReference type="PANTHER" id="PTHR21091:SF169">
    <property type="entry name" value="UROPORPHYRINOGEN DECARBOXYLASE"/>
    <property type="match status" value="1"/>
</dbReference>
<dbReference type="Pfam" id="PF01208">
    <property type="entry name" value="URO-D"/>
    <property type="match status" value="1"/>
</dbReference>
<dbReference type="SUPFAM" id="SSF51726">
    <property type="entry name" value="UROD/MetE-like"/>
    <property type="match status" value="1"/>
</dbReference>
<dbReference type="PROSITE" id="PS00906">
    <property type="entry name" value="UROD_1"/>
    <property type="match status" value="1"/>
</dbReference>
<dbReference type="PROSITE" id="PS00907">
    <property type="entry name" value="UROD_2"/>
    <property type="match status" value="1"/>
</dbReference>
<keyword id="KW-0963">Cytoplasm</keyword>
<keyword id="KW-0210">Decarboxylase</keyword>
<keyword id="KW-0456">Lyase</keyword>
<keyword id="KW-0627">Porphyrin biosynthesis</keyword>
<organism>
    <name type="scientific">Wolbachia sp. subsp. Drosophila simulans (strain wRi)</name>
    <dbReference type="NCBI Taxonomy" id="66084"/>
    <lineage>
        <taxon>Bacteria</taxon>
        <taxon>Pseudomonadati</taxon>
        <taxon>Pseudomonadota</taxon>
        <taxon>Alphaproteobacteria</taxon>
        <taxon>Rickettsiales</taxon>
        <taxon>Anaplasmataceae</taxon>
        <taxon>Wolbachieae</taxon>
        <taxon>Wolbachia</taxon>
    </lineage>
</organism>
<protein>
    <recommendedName>
        <fullName evidence="1">Uroporphyrinogen decarboxylase</fullName>
        <shortName evidence="1">UPD</shortName>
        <shortName evidence="1">URO-D</shortName>
        <ecNumber evidence="1">4.1.1.37</ecNumber>
    </recommendedName>
</protein>
<gene>
    <name evidence="1" type="primary">hemE</name>
    <name type="ordered locus">WRi_009840</name>
</gene>
<evidence type="ECO:0000255" key="1">
    <source>
        <dbReference type="HAMAP-Rule" id="MF_00218"/>
    </source>
</evidence>
<reference key="1">
    <citation type="journal article" date="2009" name="Proc. Natl. Acad. Sci. U.S.A.">
        <title>The mosaic genome structure of the Wolbachia wRi strain infecting Drosophila simulans.</title>
        <authorList>
            <person name="Klasson L."/>
            <person name="Westberg J."/>
            <person name="Sapountzis P."/>
            <person name="Naeslund K."/>
            <person name="Lutnaes Y."/>
            <person name="Darby A.C."/>
            <person name="Veneti Z."/>
            <person name="Chen L."/>
            <person name="Braig H.R."/>
            <person name="Garrett R."/>
            <person name="Bourtzis K."/>
            <person name="Andersson S.G."/>
        </authorList>
    </citation>
    <scope>NUCLEOTIDE SEQUENCE [LARGE SCALE GENOMIC DNA]</scope>
    <source>
        <strain>wRi</strain>
    </source>
</reference>
<feature type="chain" id="PRO_1000197543" description="Uroporphyrinogen decarboxylase">
    <location>
        <begin position="1"/>
        <end position="338"/>
    </location>
</feature>
<feature type="binding site" evidence="1">
    <location>
        <begin position="27"/>
        <end position="31"/>
    </location>
    <ligand>
        <name>substrate</name>
    </ligand>
</feature>
<feature type="binding site" evidence="1">
    <location>
        <position position="77"/>
    </location>
    <ligand>
        <name>substrate</name>
    </ligand>
</feature>
<feature type="binding site" evidence="1">
    <location>
        <position position="151"/>
    </location>
    <ligand>
        <name>substrate</name>
    </ligand>
</feature>
<feature type="binding site" evidence="1">
    <location>
        <position position="203"/>
    </location>
    <ligand>
        <name>substrate</name>
    </ligand>
</feature>
<feature type="binding site" evidence="1">
    <location>
        <position position="317"/>
    </location>
    <ligand>
        <name>substrate</name>
    </ligand>
</feature>
<feature type="site" description="Transition state stabilizer" evidence="1">
    <location>
        <position position="77"/>
    </location>
</feature>
<comment type="function">
    <text evidence="1">Catalyzes the decarboxylation of four acetate groups of uroporphyrinogen-III to yield coproporphyrinogen-III.</text>
</comment>
<comment type="catalytic activity">
    <reaction evidence="1">
        <text>uroporphyrinogen III + 4 H(+) = coproporphyrinogen III + 4 CO2</text>
        <dbReference type="Rhea" id="RHEA:19865"/>
        <dbReference type="ChEBI" id="CHEBI:15378"/>
        <dbReference type="ChEBI" id="CHEBI:16526"/>
        <dbReference type="ChEBI" id="CHEBI:57308"/>
        <dbReference type="ChEBI" id="CHEBI:57309"/>
        <dbReference type="EC" id="4.1.1.37"/>
    </reaction>
</comment>
<comment type="pathway">
    <text evidence="1">Porphyrin-containing compound metabolism; protoporphyrin-IX biosynthesis; coproporphyrinogen-III from 5-aminolevulinate: step 4/4.</text>
</comment>
<comment type="subunit">
    <text evidence="1">Homodimer.</text>
</comment>
<comment type="subcellular location">
    <subcellularLocation>
        <location evidence="1">Cytoplasm</location>
    </subcellularLocation>
</comment>
<comment type="similarity">
    <text evidence="1">Belongs to the uroporphyrinogen decarboxylase family.</text>
</comment>
<sequence length="338" mass="37744">MESGKTTIAKIIKRNEPGGRVPIWLMRQAGRSLPEYRKAVENMNNFMEICYNTDLVTELTLQPVTRFDMDAAIIFSDILIIADVLGCDVNFVRGVGPIIKPVESPKELKGPQEIETKTLPILNAIKKVRSQLPKEKSLIGFAGGPWTVASYIIEGGSSKTFSKVLNFYPSCLKEIIERITEVTIIYLIKQIEFGADVIQLFDSNAGALSEPLFKEYVIEPTKRIILAIKDRFSDFPIIGFPRSAGNLYKDYCEQTGVSAVSIDYNVPIKWAKANLNIPLQGNLDPNLLAYNKTEAIKEAKRIIDCFRDLPFIFNLGHGVLPDTPVENIAALVNLVKSY</sequence>
<accession>C0R449</accession>
<proteinExistence type="inferred from homology"/>
<name>DCUP_WOLWR</name>